<keyword id="KW-1003">Cell membrane</keyword>
<keyword id="KW-1015">Disulfide bond</keyword>
<keyword id="KW-0297">G-protein coupled receptor</keyword>
<keyword id="KW-0325">Glycoprotein</keyword>
<keyword id="KW-0472">Membrane</keyword>
<keyword id="KW-0675">Receptor</keyword>
<keyword id="KW-1185">Reference proteome</keyword>
<keyword id="KW-0807">Transducer</keyword>
<keyword id="KW-0812">Transmembrane</keyword>
<keyword id="KW-1133">Transmembrane helix</keyword>
<sequence length="336" mass="38823">MLGTVNTTGMQGFNKSERCPRDTRMTQLLFPVLYTVVFFTGVLLNTLALWVFIHIPSNSTFIIYLKNTLVADLIMTLMLPFKILSDSRLAPWQLRGFVCTFSSVVFYETMYVGIMMLGLIAFDRFLKIVVPFRKTFVKKTAFAKIVSISIWLLMFLISLPNMILNKEATASTVKKCASLKSPLGLLWHQVVSHTCQFIFWTVFILMLLFYTVIAKKVYDSYRKFKSRDSKHKRLEAKVFIVMAVFFVCFAPFHFVRVPYTHSQTTNKTDCRLENQLFLAKESTLFLATTNICMDPLIYIILCKKFTRKVPCMRWRTKTAASSDEHHSSQTDNITLS</sequence>
<proteinExistence type="evidence at transcript level"/>
<protein>
    <recommendedName>
        <fullName>P2Y purinoceptor 13</fullName>
        <shortName>P2Y13</shortName>
    </recommendedName>
</protein>
<comment type="function">
    <text evidence="3">Receptor for ADP. Coupled to G(i)-proteins. May play a role in hematopoiesis and the immune system.</text>
</comment>
<comment type="subcellular location">
    <subcellularLocation>
        <location>Cell membrane</location>
        <topology>Multi-pass membrane protein</topology>
    </subcellularLocation>
</comment>
<comment type="tissue specificity">
    <text evidence="3">Highest levels in spleen, liver brain and kidney. Lower but significant level are also detected in intestine, stomach, skeletal muscle, testis, heart and lung.</text>
</comment>
<comment type="similarity">
    <text evidence="2">Belongs to the G-protein coupled receptor 1 family.</text>
</comment>
<reference key="1">
    <citation type="journal article" date="2004" name="Biochem. Pharmacol.">
        <title>Cloning, pharmacological characterisation and distribution of the rat G-protein-coupled P2Y(13) receptor.</title>
        <authorList>
            <person name="Fumagalli M."/>
            <person name="Trincavelli L."/>
            <person name="Lecca D."/>
            <person name="Martini C."/>
            <person name="Ciana P."/>
            <person name="Abbracchio M.P."/>
        </authorList>
    </citation>
    <scope>NUCLEOTIDE SEQUENCE [MRNA]</scope>
    <scope>FUNCTION</scope>
    <scope>TISSUE SPECIFICITY</scope>
    <source>
        <strain>Sprague-Dawley</strain>
    </source>
</reference>
<name>P2Y13_RAT</name>
<gene>
    <name type="primary">P2ry13</name>
</gene>
<organism>
    <name type="scientific">Rattus norvegicus</name>
    <name type="common">Rat</name>
    <dbReference type="NCBI Taxonomy" id="10116"/>
    <lineage>
        <taxon>Eukaryota</taxon>
        <taxon>Metazoa</taxon>
        <taxon>Chordata</taxon>
        <taxon>Craniata</taxon>
        <taxon>Vertebrata</taxon>
        <taxon>Euteleostomi</taxon>
        <taxon>Mammalia</taxon>
        <taxon>Eutheria</taxon>
        <taxon>Euarchontoglires</taxon>
        <taxon>Glires</taxon>
        <taxon>Rodentia</taxon>
        <taxon>Myomorpha</taxon>
        <taxon>Muroidea</taxon>
        <taxon>Muridae</taxon>
        <taxon>Murinae</taxon>
        <taxon>Rattus</taxon>
    </lineage>
</organism>
<dbReference type="EMBL" id="AY639875">
    <property type="protein sequence ID" value="AAT57664.1"/>
    <property type="molecule type" value="mRNA"/>
</dbReference>
<dbReference type="RefSeq" id="NP_001002853.1">
    <property type="nucleotide sequence ID" value="NM_001002853.1"/>
</dbReference>
<dbReference type="RefSeq" id="XP_008759213.1">
    <property type="nucleotide sequence ID" value="XM_008760991.4"/>
</dbReference>
<dbReference type="SMR" id="Q6GUG4"/>
<dbReference type="CORUM" id="Q6GUG4"/>
<dbReference type="FunCoup" id="Q6GUG4">
    <property type="interactions" value="141"/>
</dbReference>
<dbReference type="STRING" id="10116.ENSRNOP00000047532"/>
<dbReference type="ChEMBL" id="CHEMBL4524124"/>
<dbReference type="GlyCosmos" id="Q6GUG4">
    <property type="glycosylation" value="3 sites, No reported glycans"/>
</dbReference>
<dbReference type="GlyGen" id="Q6GUG4">
    <property type="glycosylation" value="3 sites"/>
</dbReference>
<dbReference type="PhosphoSitePlus" id="Q6GUG4"/>
<dbReference type="PaxDb" id="10116-ENSRNOP00000047532"/>
<dbReference type="Ensembl" id="ENSRNOT00000051027.3">
    <property type="protein sequence ID" value="ENSRNOP00000047532.1"/>
    <property type="gene ID" value="ENSRNOG00000029756.3"/>
</dbReference>
<dbReference type="GeneID" id="310444"/>
<dbReference type="KEGG" id="rno:310444"/>
<dbReference type="UCSC" id="RGD:1302941">
    <property type="organism name" value="rat"/>
</dbReference>
<dbReference type="AGR" id="RGD:1302941"/>
<dbReference type="CTD" id="53829"/>
<dbReference type="RGD" id="1302941">
    <property type="gene designation" value="P2ry13"/>
</dbReference>
<dbReference type="eggNOG" id="ENOG502QUS2">
    <property type="taxonomic scope" value="Eukaryota"/>
</dbReference>
<dbReference type="GeneTree" id="ENSGT01110000267167"/>
<dbReference type="HOGENOM" id="CLU_009579_8_2_1"/>
<dbReference type="InParanoid" id="Q6GUG4"/>
<dbReference type="OMA" id="TERLPCM"/>
<dbReference type="OrthoDB" id="6163051at2759"/>
<dbReference type="PhylomeDB" id="Q6GUG4"/>
<dbReference type="TreeFam" id="TF330969"/>
<dbReference type="Reactome" id="R-RNO-417957">
    <property type="pathway name" value="P2Y receptors"/>
</dbReference>
<dbReference type="Reactome" id="R-RNO-418594">
    <property type="pathway name" value="G alpha (i) signalling events"/>
</dbReference>
<dbReference type="PRO" id="PR:Q6GUG4"/>
<dbReference type="Proteomes" id="UP000002494">
    <property type="component" value="Chromosome 2"/>
</dbReference>
<dbReference type="Bgee" id="ENSRNOG00000029756">
    <property type="expression patterns" value="Expressed in spleen and 17 other cell types or tissues"/>
</dbReference>
<dbReference type="GO" id="GO:0005783">
    <property type="term" value="C:endoplasmic reticulum"/>
    <property type="evidence" value="ECO:0000266"/>
    <property type="project" value="RGD"/>
</dbReference>
<dbReference type="GO" id="GO:0005886">
    <property type="term" value="C:plasma membrane"/>
    <property type="evidence" value="ECO:0007669"/>
    <property type="project" value="UniProtKB-SubCell"/>
</dbReference>
<dbReference type="GO" id="GO:0045028">
    <property type="term" value="F:G protein-coupled purinergic nucleotide receptor activity"/>
    <property type="evidence" value="ECO:0000314"/>
    <property type="project" value="RGD"/>
</dbReference>
<dbReference type="GO" id="GO:0007186">
    <property type="term" value="P:G protein-coupled receptor signaling pathway"/>
    <property type="evidence" value="ECO:0000318"/>
    <property type="project" value="GO_Central"/>
</dbReference>
<dbReference type="FunFam" id="1.20.1070.10:FF:000049">
    <property type="entry name" value="G-protein coupled receptor 87"/>
    <property type="match status" value="1"/>
</dbReference>
<dbReference type="Gene3D" id="1.20.1070.10">
    <property type="entry name" value="Rhodopsin 7-helix transmembrane proteins"/>
    <property type="match status" value="1"/>
</dbReference>
<dbReference type="InterPro" id="IPR000276">
    <property type="entry name" value="GPCR_Rhodpsn"/>
</dbReference>
<dbReference type="InterPro" id="IPR017452">
    <property type="entry name" value="GPCR_Rhodpsn_7TM"/>
</dbReference>
<dbReference type="InterPro" id="IPR008109">
    <property type="entry name" value="P2Y13_rcpt"/>
</dbReference>
<dbReference type="PANTHER" id="PTHR24233:SF10">
    <property type="entry name" value="P2Y PURINOCEPTOR 13"/>
    <property type="match status" value="1"/>
</dbReference>
<dbReference type="PANTHER" id="PTHR24233">
    <property type="entry name" value="P2Y PURINOCEPTOR-RELATED G-PROTEIN COUPLED RECEPTOR"/>
    <property type="match status" value="1"/>
</dbReference>
<dbReference type="Pfam" id="PF00001">
    <property type="entry name" value="7tm_1"/>
    <property type="match status" value="1"/>
</dbReference>
<dbReference type="PRINTS" id="PR00237">
    <property type="entry name" value="GPCRRHODOPSN"/>
</dbReference>
<dbReference type="PRINTS" id="PR01735">
    <property type="entry name" value="P2Y13PRNCPTR"/>
</dbReference>
<dbReference type="PRINTS" id="PR01157">
    <property type="entry name" value="P2YPURNOCPTR"/>
</dbReference>
<dbReference type="SUPFAM" id="SSF81321">
    <property type="entry name" value="Family A G protein-coupled receptor-like"/>
    <property type="match status" value="1"/>
</dbReference>
<dbReference type="PROSITE" id="PS00237">
    <property type="entry name" value="G_PROTEIN_RECEP_F1_1"/>
    <property type="match status" value="1"/>
</dbReference>
<dbReference type="PROSITE" id="PS50262">
    <property type="entry name" value="G_PROTEIN_RECEP_F1_2"/>
    <property type="match status" value="1"/>
</dbReference>
<accession>Q6GUG4</accession>
<feature type="chain" id="PRO_0000070043" description="P2Y purinoceptor 13">
    <location>
        <begin position="1"/>
        <end position="336"/>
    </location>
</feature>
<feature type="topological domain" description="Extracellular" evidence="1">
    <location>
        <begin position="1"/>
        <end position="32"/>
    </location>
</feature>
<feature type="transmembrane region" description="Helical; Name=1" evidence="1">
    <location>
        <begin position="33"/>
        <end position="53"/>
    </location>
</feature>
<feature type="topological domain" description="Cytoplasmic" evidence="1">
    <location>
        <begin position="54"/>
        <end position="60"/>
    </location>
</feature>
<feature type="transmembrane region" description="Helical; Name=2" evidence="1">
    <location>
        <begin position="61"/>
        <end position="81"/>
    </location>
</feature>
<feature type="topological domain" description="Extracellular" evidence="1">
    <location>
        <begin position="82"/>
        <end position="100"/>
    </location>
</feature>
<feature type="transmembrane region" description="Helical; Name=3" evidence="1">
    <location>
        <begin position="101"/>
        <end position="121"/>
    </location>
</feature>
<feature type="topological domain" description="Cytoplasmic" evidence="1">
    <location>
        <begin position="122"/>
        <end position="144"/>
    </location>
</feature>
<feature type="transmembrane region" description="Helical; Name=4" evidence="1">
    <location>
        <begin position="145"/>
        <end position="165"/>
    </location>
</feature>
<feature type="topological domain" description="Extracellular" evidence="1">
    <location>
        <begin position="166"/>
        <end position="193"/>
    </location>
</feature>
<feature type="transmembrane region" description="Helical; Name=5" evidence="1">
    <location>
        <begin position="194"/>
        <end position="214"/>
    </location>
</feature>
<feature type="topological domain" description="Cytoplasmic" evidence="1">
    <location>
        <begin position="215"/>
        <end position="237"/>
    </location>
</feature>
<feature type="transmembrane region" description="Helical; Name=6" evidence="1">
    <location>
        <begin position="238"/>
        <end position="258"/>
    </location>
</feature>
<feature type="topological domain" description="Extracellular" evidence="1">
    <location>
        <begin position="259"/>
        <end position="281"/>
    </location>
</feature>
<feature type="transmembrane region" description="Helical; Name=7" evidence="1">
    <location>
        <begin position="282"/>
        <end position="302"/>
    </location>
</feature>
<feature type="topological domain" description="Cytoplasmic" evidence="1">
    <location>
        <begin position="303"/>
        <end position="336"/>
    </location>
</feature>
<feature type="glycosylation site" description="N-linked (GlcNAc...) asparagine" evidence="1">
    <location>
        <position position="6"/>
    </location>
</feature>
<feature type="glycosylation site" description="N-linked (GlcNAc...) asparagine" evidence="1">
    <location>
        <position position="14"/>
    </location>
</feature>
<feature type="glycosylation site" description="N-linked (GlcNAc...) asparagine" evidence="1">
    <location>
        <position position="266"/>
    </location>
</feature>
<feature type="disulfide bond" evidence="2">
    <location>
        <begin position="99"/>
        <end position="176"/>
    </location>
</feature>
<evidence type="ECO:0000255" key="1"/>
<evidence type="ECO:0000255" key="2">
    <source>
        <dbReference type="PROSITE-ProRule" id="PRU00521"/>
    </source>
</evidence>
<evidence type="ECO:0000269" key="3">
    <source>
    </source>
</evidence>